<proteinExistence type="evidence at protein level"/>
<feature type="chain" id="PRO_0000406355" description="Long-chain-fatty-acid--AMP ligase FadD28">
    <location>
        <begin position="1"/>
        <end position="580"/>
    </location>
</feature>
<feature type="region of interest" description="Disordered" evidence="1">
    <location>
        <begin position="421"/>
        <end position="440"/>
    </location>
</feature>
<feature type="site" description="Important for substrate selectivity">
    <location>
        <position position="227"/>
    </location>
</feature>
<feature type="site" description="Important for substrate selectivity">
    <location>
        <position position="330"/>
    </location>
</feature>
<feature type="mutagenesis site" description="Shows substantial decrease (69%) in the activity with lauric acid (C12 fatty acid) as substrate but shows a 4-fold higher activity with the long chain fatty acyl capric acid (C10 fatty acid) as substrate." evidence="7">
    <original>I</original>
    <variation>W</variation>
    <location>
        <position position="227"/>
    </location>
</feature>
<feature type="mutagenesis site" description="No activity with lauric acid (C12 fatty acid) as substrate. Instead, it catalyzes activation of acetic acid (C2 fatty acid) as acetyl-AMP." evidence="7">
    <original>G</original>
    <variation>W</variation>
    <location>
        <position position="330"/>
    </location>
</feature>
<feature type="helix" evidence="13">
    <location>
        <begin position="6"/>
        <end position="16"/>
    </location>
</feature>
<feature type="strand" evidence="13">
    <location>
        <begin position="20"/>
        <end position="27"/>
    </location>
</feature>
<feature type="turn" evidence="13">
    <location>
        <begin position="28"/>
        <end position="30"/>
    </location>
</feature>
<feature type="strand" evidence="13">
    <location>
        <begin position="35"/>
        <end position="40"/>
    </location>
</feature>
<feature type="helix" evidence="13">
    <location>
        <begin position="41"/>
        <end position="55"/>
    </location>
</feature>
<feature type="strand" evidence="13">
    <location>
        <begin position="64"/>
        <end position="68"/>
    </location>
</feature>
<feature type="helix" evidence="13">
    <location>
        <begin position="73"/>
        <end position="84"/>
    </location>
</feature>
<feature type="strand" evidence="13">
    <location>
        <begin position="88"/>
        <end position="92"/>
    </location>
</feature>
<feature type="helix" evidence="13">
    <location>
        <begin position="103"/>
        <end position="111"/>
    </location>
</feature>
<feature type="strand" evidence="13">
    <location>
        <begin position="114"/>
        <end position="118"/>
    </location>
</feature>
<feature type="turn" evidence="13">
    <location>
        <begin position="120"/>
        <end position="122"/>
    </location>
</feature>
<feature type="helix" evidence="13">
    <location>
        <begin position="123"/>
        <end position="128"/>
    </location>
</feature>
<feature type="strand" evidence="13">
    <location>
        <begin position="140"/>
        <end position="143"/>
    </location>
</feature>
<feature type="helix" evidence="13">
    <location>
        <begin position="144"/>
        <end position="146"/>
    </location>
</feature>
<feature type="strand" evidence="13">
    <location>
        <begin position="164"/>
        <end position="169"/>
    </location>
</feature>
<feature type="strand" evidence="13">
    <location>
        <begin position="181"/>
        <end position="184"/>
    </location>
</feature>
<feature type="helix" evidence="13">
    <location>
        <begin position="185"/>
        <end position="199"/>
    </location>
</feature>
<feature type="turn" evidence="13">
    <location>
        <begin position="201"/>
        <end position="205"/>
    </location>
</feature>
<feature type="strand" evidence="13">
    <location>
        <begin position="211"/>
        <end position="215"/>
    </location>
</feature>
<feature type="helix" evidence="13">
    <location>
        <begin position="224"/>
        <end position="228"/>
    </location>
</feature>
<feature type="helix" evidence="13">
    <location>
        <begin position="230"/>
        <end position="235"/>
    </location>
</feature>
<feature type="strand" evidence="13">
    <location>
        <begin position="239"/>
        <end position="241"/>
    </location>
</feature>
<feature type="helix" evidence="13">
    <location>
        <begin position="244"/>
        <end position="249"/>
    </location>
</feature>
<feature type="helix" evidence="13">
    <location>
        <begin position="252"/>
        <end position="257"/>
    </location>
</feature>
<feature type="strand" evidence="13">
    <location>
        <begin position="260"/>
        <end position="268"/>
    </location>
</feature>
<feature type="helix" evidence="13">
    <location>
        <begin position="270"/>
        <end position="279"/>
    </location>
</feature>
<feature type="helix" evidence="13">
    <location>
        <begin position="283"/>
        <end position="285"/>
    </location>
</feature>
<feature type="strand" evidence="13">
    <location>
        <begin position="295"/>
        <end position="298"/>
    </location>
</feature>
<feature type="strand" evidence="12">
    <location>
        <begin position="300"/>
        <end position="302"/>
    </location>
</feature>
<feature type="helix" evidence="13">
    <location>
        <begin position="305"/>
        <end position="314"/>
    </location>
</feature>
<feature type="helix" evidence="13">
    <location>
        <begin position="316"/>
        <end position="318"/>
    </location>
</feature>
<feature type="helix" evidence="13">
    <location>
        <begin position="322"/>
        <end position="324"/>
    </location>
</feature>
<feature type="strand" evidence="13">
    <location>
        <begin position="325"/>
        <end position="331"/>
    </location>
</feature>
<feature type="turn" evidence="13">
    <location>
        <begin position="332"/>
        <end position="335"/>
    </location>
</feature>
<feature type="strand" evidence="13">
    <location>
        <begin position="336"/>
        <end position="340"/>
    </location>
</feature>
<feature type="strand" evidence="13">
    <location>
        <begin position="349"/>
        <end position="352"/>
    </location>
</feature>
<feature type="helix" evidence="13">
    <location>
        <begin position="354"/>
        <end position="358"/>
    </location>
</feature>
<feature type="strand" evidence="13">
    <location>
        <begin position="367"/>
        <end position="369"/>
    </location>
</feature>
<feature type="strand" evidence="13">
    <location>
        <begin position="371"/>
        <end position="374"/>
    </location>
</feature>
<feature type="strand" evidence="13">
    <location>
        <begin position="380"/>
        <end position="387"/>
    </location>
</feature>
<feature type="turn" evidence="13">
    <location>
        <begin position="389"/>
        <end position="391"/>
    </location>
</feature>
<feature type="strand" evidence="13">
    <location>
        <begin position="401"/>
        <end position="407"/>
    </location>
</feature>
<feature type="helix" evidence="13">
    <location>
        <begin position="418"/>
        <end position="425"/>
    </location>
</feature>
<feature type="strand" evidence="13">
    <location>
        <begin position="441"/>
        <end position="451"/>
    </location>
</feature>
<feature type="strand" evidence="13">
    <location>
        <begin position="454"/>
        <end position="459"/>
    </location>
</feature>
<comment type="function">
    <text evidence="2 3 8 11">Involved in the biosynthesis of phthiocerol dimycocerosate (PDIM), a cell wall-associated lipid found only in pathogenic mycobacteria (PubMed:10573420, PubMed:11279114). Catalyzes the activation of long-chain fatty acids as acyl-adenylates (acyl-AMP), which are then transferred to the multifunctional polyketide synthase Mas for further chain extension (PubMed:24831705). Probably plays a role in host phagosome maturation arrest (Probable).</text>
</comment>
<comment type="catalytic activity">
    <reaction evidence="8">
        <text>holo-[mycocerosate synthase] + a long-chain fatty acid + ATP = a long-chain fatty acyl-[mycocerosate synthase] + AMP + diphosphate</text>
        <dbReference type="Rhea" id="RHEA:10696"/>
        <dbReference type="Rhea" id="RHEA-COMP:12641"/>
        <dbReference type="Rhea" id="RHEA-COMP:13239"/>
        <dbReference type="ChEBI" id="CHEBI:30616"/>
        <dbReference type="ChEBI" id="CHEBI:33019"/>
        <dbReference type="ChEBI" id="CHEBI:57560"/>
        <dbReference type="ChEBI" id="CHEBI:64479"/>
        <dbReference type="ChEBI" id="CHEBI:133243"/>
        <dbReference type="ChEBI" id="CHEBI:456215"/>
        <dbReference type="EC" id="6.2.1.49"/>
    </reaction>
    <physiologicalReaction direction="left-to-right" evidence="8">
        <dbReference type="Rhea" id="RHEA:10697"/>
    </physiologicalReaction>
</comment>
<comment type="catalytic activity">
    <reaction evidence="8">
        <text>a long-chain fatty acid + ATP + H(+) = a long-chain fatty acyl-AMP + diphosphate</text>
        <dbReference type="Rhea" id="RHEA:52336"/>
        <dbReference type="ChEBI" id="CHEBI:15378"/>
        <dbReference type="ChEBI" id="CHEBI:30616"/>
        <dbReference type="ChEBI" id="CHEBI:33019"/>
        <dbReference type="ChEBI" id="CHEBI:57560"/>
        <dbReference type="ChEBI" id="CHEBI:136562"/>
    </reaction>
    <physiologicalReaction direction="left-to-right" evidence="8">
        <dbReference type="Rhea" id="RHEA:52337"/>
    </physiologicalReaction>
</comment>
<comment type="catalytic activity">
    <reaction evidence="8">
        <text>holo-[mycocerosate synthase] + a long-chain fatty acyl-AMP = a long-chain fatty acyl-[mycocerosate synthase] + AMP + H(+)</text>
        <dbReference type="Rhea" id="RHEA:52340"/>
        <dbReference type="Rhea" id="RHEA-COMP:12641"/>
        <dbReference type="Rhea" id="RHEA-COMP:13239"/>
        <dbReference type="ChEBI" id="CHEBI:15378"/>
        <dbReference type="ChEBI" id="CHEBI:64479"/>
        <dbReference type="ChEBI" id="CHEBI:133243"/>
        <dbReference type="ChEBI" id="CHEBI:136562"/>
        <dbReference type="ChEBI" id="CHEBI:456215"/>
    </reaction>
    <physiologicalReaction direction="left-to-right" evidence="8">
        <dbReference type="Rhea" id="RHEA:52341"/>
    </physiologicalReaction>
</comment>
<comment type="catalytic activity">
    <reaction evidence="4 5">
        <text>dodecanoate + ATP + H(+) = dodecanoyl-AMP + diphosphate</text>
        <dbReference type="Rhea" id="RHEA:43712"/>
        <dbReference type="ChEBI" id="CHEBI:15378"/>
        <dbReference type="ChEBI" id="CHEBI:18262"/>
        <dbReference type="ChEBI" id="CHEBI:30616"/>
        <dbReference type="ChEBI" id="CHEBI:33019"/>
        <dbReference type="ChEBI" id="CHEBI:83623"/>
    </reaction>
    <physiologicalReaction direction="left-to-right" evidence="4 5">
        <dbReference type="Rhea" id="RHEA:43713"/>
    </physiologicalReaction>
</comment>
<comment type="catalytic activity">
    <reaction evidence="5">
        <text>hexadecanoate + ATP + H(+) = hexadecanoyl-AMP + diphosphate</text>
        <dbReference type="Rhea" id="RHEA:43708"/>
        <dbReference type="ChEBI" id="CHEBI:7896"/>
        <dbReference type="ChEBI" id="CHEBI:15378"/>
        <dbReference type="ChEBI" id="CHEBI:30616"/>
        <dbReference type="ChEBI" id="CHEBI:33019"/>
        <dbReference type="ChEBI" id="CHEBI:83627"/>
    </reaction>
    <physiologicalReaction direction="left-to-right" evidence="5">
        <dbReference type="Rhea" id="RHEA:43709"/>
    </physiologicalReaction>
</comment>
<comment type="activity regulation">
    <text evidence="5">Inhibited by acylsulfamoyl (acyl-AMS) analogs.</text>
</comment>
<comment type="pathway">
    <text evidence="2 3">Lipid metabolism; fatty acid biosynthesis.</text>
</comment>
<comment type="disruption phenotype">
    <text evidence="2 3 6">Disruption of fadD28 abolishes the production of phthiocerol dimycocerosate (DIM) on the cell envelope (PubMed:10573420, PubMed:11279114). Grows normally in liquid culture, traffics into host (human and mouse) acidified compartments early after phagocytosis, suggesting it no longer arrests phagosome maturation as well as wild-type, impaired growth in mouse macrophages (PubMed:20844580).</text>
</comment>
<comment type="similarity">
    <text evidence="10">Belongs to the ATP-dependent AMP-binding enzyme family.</text>
</comment>
<name>FAA28_MYCTU</name>
<protein>
    <recommendedName>
        <fullName evidence="10">Long-chain-fatty-acid--AMP ligase FadD28</fullName>
        <ecNumber evidence="8">6.2.1.49</ecNumber>
    </recommendedName>
    <alternativeName>
        <fullName>Acyl-AMP synthetase</fullName>
    </alternativeName>
    <alternativeName>
        <fullName evidence="9">FAAL28</fullName>
    </alternativeName>
    <alternativeName>
        <fullName evidence="10">Long-chain fatty acid adenylyltransferase FadD28</fullName>
    </alternativeName>
</protein>
<organism>
    <name type="scientific">Mycobacterium tuberculosis (strain ATCC 25618 / H37Rv)</name>
    <dbReference type="NCBI Taxonomy" id="83332"/>
    <lineage>
        <taxon>Bacteria</taxon>
        <taxon>Bacillati</taxon>
        <taxon>Actinomycetota</taxon>
        <taxon>Actinomycetes</taxon>
        <taxon>Mycobacteriales</taxon>
        <taxon>Mycobacteriaceae</taxon>
        <taxon>Mycobacterium</taxon>
        <taxon>Mycobacterium tuberculosis complex</taxon>
    </lineage>
</organism>
<accession>P9WQ59</accession>
<accession>L0TCP5</accession>
<accession>P96290</accession>
<accession>Q7D6E4</accession>
<reference key="1">
    <citation type="journal article" date="1998" name="Nature">
        <title>Deciphering the biology of Mycobacterium tuberculosis from the complete genome sequence.</title>
        <authorList>
            <person name="Cole S.T."/>
            <person name="Brosch R."/>
            <person name="Parkhill J."/>
            <person name="Garnier T."/>
            <person name="Churcher C.M."/>
            <person name="Harris D.E."/>
            <person name="Gordon S.V."/>
            <person name="Eiglmeier K."/>
            <person name="Gas S."/>
            <person name="Barry C.E. III"/>
            <person name="Tekaia F."/>
            <person name="Badcock K."/>
            <person name="Basham D."/>
            <person name="Brown D."/>
            <person name="Chillingworth T."/>
            <person name="Connor R."/>
            <person name="Davies R.M."/>
            <person name="Devlin K."/>
            <person name="Feltwell T."/>
            <person name="Gentles S."/>
            <person name="Hamlin N."/>
            <person name="Holroyd S."/>
            <person name="Hornsby T."/>
            <person name="Jagels K."/>
            <person name="Krogh A."/>
            <person name="McLean J."/>
            <person name="Moule S."/>
            <person name="Murphy L.D."/>
            <person name="Oliver S."/>
            <person name="Osborne J."/>
            <person name="Quail M.A."/>
            <person name="Rajandream M.A."/>
            <person name="Rogers J."/>
            <person name="Rutter S."/>
            <person name="Seeger K."/>
            <person name="Skelton S."/>
            <person name="Squares S."/>
            <person name="Squares R."/>
            <person name="Sulston J.E."/>
            <person name="Taylor K."/>
            <person name="Whitehead S."/>
            <person name="Barrell B.G."/>
        </authorList>
    </citation>
    <scope>NUCLEOTIDE SEQUENCE [LARGE SCALE GENOMIC DNA]</scope>
    <source>
        <strain>ATCC 25618 / H37Rv</strain>
    </source>
</reference>
<reference key="2">
    <citation type="journal article" date="1999" name="Nature">
        <title>Complex lipid determines tissue-specific replication of Mycobacterium tuberculosis in mice.</title>
        <authorList>
            <person name="Cox J.S."/>
            <person name="Chen B."/>
            <person name="McNeil M."/>
            <person name="Jacobs W.R. Jr."/>
        </authorList>
    </citation>
    <scope>FUNCTION IN THE BIOSYNTHESIS OF MYCOCEROSATES</scope>
    <scope>PATHWAY</scope>
    <scope>DISRUPTION PHENOTYPE</scope>
    <source>
        <strain>ATCC 25618 / H37Rv</strain>
    </source>
</reference>
<reference key="3">
    <citation type="journal article" date="2001" name="J. Biol. Chem.">
        <title>Analysis of the phthiocerol dimycocerosate locus of Mycobacterium tuberculosis. Evidence that this lipid is involved in the cell wall permeability barrier.</title>
        <authorList>
            <person name="Camacho L.R."/>
            <person name="Constant P."/>
            <person name="Raynaud C."/>
            <person name="Laneelle M.A."/>
            <person name="Triccas J.A."/>
            <person name="Gicquel B."/>
            <person name="Daffe M."/>
            <person name="Guilhot C."/>
        </authorList>
    </citation>
    <scope>FUNCTION IN THE BIOSYNTHESIS OF MYCOCEROSATES</scope>
    <scope>PATHWAY</scope>
    <scope>DISRUPTION PHENOTYPE</scope>
    <source>
        <strain>ATCC 25618 / H37Rv</strain>
    </source>
</reference>
<reference key="4">
    <citation type="journal article" date="2004" name="Nature">
        <title>Enzymic activation and transfer of fatty acids as acyl-adenylates in mycobacteria.</title>
        <authorList>
            <person name="Trivedi O.A."/>
            <person name="Arora P."/>
            <person name="Sridharan V."/>
            <person name="Tickoo R."/>
            <person name="Mohanty D."/>
            <person name="Gokhale R.S."/>
        </authorList>
    </citation>
    <scope>FUNCTION AS AN ACYL-AMP SYNTHETASE</scope>
    <scope>CATALYTIC ACTIVITY</scope>
    <source>
        <strain>ATCC 25618 / H37Rv</strain>
    </source>
</reference>
<reference key="5">
    <citation type="journal article" date="2008" name="BMC Syst. Biol.">
        <title>targetTB: a target identification pipeline for Mycobacterium tuberculosis through an interactome, reactome and genome-scale structural analysis.</title>
        <authorList>
            <person name="Raman K."/>
            <person name="Yeturu K."/>
            <person name="Chandra N."/>
        </authorList>
    </citation>
    <scope>IDENTIFICATION AS A DRUG TARGET [LARGE SCALE ANALYSIS]</scope>
</reference>
<reference key="6">
    <citation type="journal article" date="2010" name="PLoS Pathog.">
        <title>High content phenotypic cell-based visual screen identifies Mycobacterium tuberculosis acyltrehalose-containing glycolipids involved in phagosome remodeling.</title>
        <authorList>
            <person name="Brodin P."/>
            <person name="Poquet Y."/>
            <person name="Levillain F."/>
            <person name="Peguillet I."/>
            <person name="Larrouy-Maumus G."/>
            <person name="Gilleron M."/>
            <person name="Ewann F."/>
            <person name="Christophe T."/>
            <person name="Fenistein D."/>
            <person name="Jang J."/>
            <person name="Jang M.S."/>
            <person name="Park S.J."/>
            <person name="Rauzier J."/>
            <person name="Carralot J.P."/>
            <person name="Shrimpton R."/>
            <person name="Genovesio A."/>
            <person name="Gonzalo-Asensio J.A."/>
            <person name="Puzo G."/>
            <person name="Martin C."/>
            <person name="Brosch R."/>
            <person name="Stewart G.R."/>
            <person name="Gicquel B."/>
            <person name="Neyrolles O."/>
        </authorList>
    </citation>
    <scope>FUNCTION</scope>
    <scope>DISRUPTION PHENOTYPE</scope>
    <source>
        <strain>Beijing GC1237</strain>
    </source>
</reference>
<reference key="7">
    <citation type="journal article" date="2011" name="Mol. Cell. Proteomics">
        <title>Proteogenomic analysis of Mycobacterium tuberculosis by high resolution mass spectrometry.</title>
        <authorList>
            <person name="Kelkar D.S."/>
            <person name="Kumar D."/>
            <person name="Kumar P."/>
            <person name="Balakrishnan L."/>
            <person name="Muthusamy B."/>
            <person name="Yadav A.K."/>
            <person name="Shrivastava P."/>
            <person name="Marimuthu A."/>
            <person name="Anand S."/>
            <person name="Sundaram H."/>
            <person name="Kingsbury R."/>
            <person name="Harsha H.C."/>
            <person name="Nair B."/>
            <person name="Prasad T.S."/>
            <person name="Chauhan D.S."/>
            <person name="Katoch K."/>
            <person name="Katoch V.M."/>
            <person name="Kumar P."/>
            <person name="Chaerkady R."/>
            <person name="Ramachandran S."/>
            <person name="Dash D."/>
            <person name="Pandey A."/>
        </authorList>
    </citation>
    <scope>IDENTIFICATION BY MASS SPECTROMETRY [LARGE SCALE ANALYSIS]</scope>
    <source>
        <strain>ATCC 25618 / H37Rv</strain>
    </source>
</reference>
<reference key="8">
    <citation type="journal article" date="2014" name="Metab. Eng.">
        <title>Expanding the chemical diversity of natural esters by engineering a polyketide-derived pathway into Escherichia coli.</title>
        <authorList>
            <person name="Menendez-Bravo S."/>
            <person name="Comba S."/>
            <person name="Sabatini M."/>
            <person name="Arabolaza A."/>
            <person name="Gramajo H."/>
        </authorList>
    </citation>
    <scope>FUNCTION</scope>
    <scope>CATALYTIC ACTIVITY</scope>
</reference>
<reference key="9">
    <citation type="journal article" date="2006" name="Acta Crystallogr. F">
        <title>Crystallization and preliminary X-ray crystallographic studies of the N-terminal domain of FadD28, a fatty-acyl AMP ligase from Mycobacterium tuberculosis.</title>
        <authorList>
            <person name="Goyal A."/>
            <person name="Yousuf M."/>
            <person name="Rajakumara E."/>
            <person name="Arora P."/>
            <person name="Gokhale R.S."/>
            <person name="Sankaranarayanan R."/>
        </authorList>
    </citation>
    <scope>CRYSTALLIZATION OF THE N-TERMINAL DOMAIN</scope>
</reference>
<reference key="10">
    <citation type="journal article" date="2009" name="Nat. Chem. Biol.">
        <title>Mechanistic and functional insights into fatty acid activation in Mycobacterium tuberculosis.</title>
        <authorList>
            <person name="Arora P."/>
            <person name="Goyal A."/>
            <person name="Natarajan V.T."/>
            <person name="Rajakumara E."/>
            <person name="Verma P."/>
            <person name="Gupta R."/>
            <person name="Yousuf M."/>
            <person name="Trivedi O.A."/>
            <person name="Mohanty D."/>
            <person name="Tyagi A."/>
            <person name="Sankaranarayanan R."/>
            <person name="Gokhale R.S."/>
        </authorList>
    </citation>
    <scope>X-RAY CRYSTALLOGRAPHY (2.35 ANGSTROMS) OF 1-460</scope>
    <scope>CATALYTIC ACTIVITY</scope>
    <scope>ACTIVITY REGULATION</scope>
    <scope>NOMENCLATURE</scope>
    <source>
        <strain>ATCC 25618 / H37Rv</strain>
    </source>
</reference>
<reference key="11">
    <citation type="journal article" date="2012" name="J. Mol. Biol.">
        <title>Molecular basis of the functional divergence of fatty acyl-AMP ligase biosynthetic enzymes of Mycobacterium tuberculosis.</title>
        <authorList>
            <person name="Goyal A."/>
            <person name="Verma P."/>
            <person name="Anandhakrishnan M."/>
            <person name="Gokhale R.S."/>
            <person name="Sankaranarayanan R."/>
        </authorList>
    </citation>
    <scope>X-RAY CRYSTALLOGRAPHY (2.05 ANGSTROMS) OF 1-460 OF MUTANT TRP-330</scope>
    <scope>MUTAGENESIS OF ILE-227 AND GLY-330</scope>
    <scope>SUBSTRATE SELECTIVITY</scope>
</reference>
<keyword id="KW-0002">3D-structure</keyword>
<keyword id="KW-0067">ATP-binding</keyword>
<keyword id="KW-0276">Fatty acid metabolism</keyword>
<keyword id="KW-0436">Ligase</keyword>
<keyword id="KW-0443">Lipid metabolism</keyword>
<keyword id="KW-0547">Nucleotide-binding</keyword>
<keyword id="KW-1185">Reference proteome</keyword>
<dbReference type="EC" id="6.2.1.49" evidence="8"/>
<dbReference type="EMBL" id="AL123456">
    <property type="protein sequence ID" value="CCP45744.1"/>
    <property type="molecule type" value="Genomic_DNA"/>
</dbReference>
<dbReference type="PIR" id="B70668">
    <property type="entry name" value="B70668"/>
</dbReference>
<dbReference type="RefSeq" id="NP_217457.1">
    <property type="nucleotide sequence ID" value="NC_000962.3"/>
</dbReference>
<dbReference type="RefSeq" id="WP_003414857.1">
    <property type="nucleotide sequence ID" value="NZ_NVQJ01000015.1"/>
</dbReference>
<dbReference type="PDB" id="3E53">
    <property type="method" value="X-ray"/>
    <property type="resolution" value="2.35 A"/>
    <property type="chains" value="A=1-460"/>
</dbReference>
<dbReference type="PDB" id="3T5A">
    <property type="method" value="X-ray"/>
    <property type="resolution" value="2.05 A"/>
    <property type="chains" value="A=1-460"/>
</dbReference>
<dbReference type="PDBsum" id="3E53"/>
<dbReference type="PDBsum" id="3T5A"/>
<dbReference type="SMR" id="P9WQ59"/>
<dbReference type="FunCoup" id="P9WQ59">
    <property type="interactions" value="9"/>
</dbReference>
<dbReference type="STRING" id="83332.Rv2941"/>
<dbReference type="BindingDB" id="P9WQ59"/>
<dbReference type="ChEMBL" id="CHEMBL5766"/>
<dbReference type="SwissLipids" id="SLP:000000975"/>
<dbReference type="PaxDb" id="83332-Rv2941"/>
<dbReference type="DNASU" id="887454"/>
<dbReference type="GeneID" id="887454"/>
<dbReference type="KEGG" id="mtu:Rv2941"/>
<dbReference type="KEGG" id="mtv:RVBD_2941"/>
<dbReference type="TubercuList" id="Rv2941"/>
<dbReference type="eggNOG" id="COG0318">
    <property type="taxonomic scope" value="Bacteria"/>
</dbReference>
<dbReference type="InParanoid" id="P9WQ59"/>
<dbReference type="OrthoDB" id="3671040at2"/>
<dbReference type="PhylomeDB" id="P9WQ59"/>
<dbReference type="BRENDA" id="6.2.1.49">
    <property type="organism ID" value="3445"/>
</dbReference>
<dbReference type="Reactome" id="R-MTU-9635470">
    <property type="pathway name" value="Dimycocersyl phthiocerol biosynthesis"/>
</dbReference>
<dbReference type="UniPathway" id="UPA00094"/>
<dbReference type="EvolutionaryTrace" id="P9WQ59"/>
<dbReference type="PRO" id="PR:P9WQ59"/>
<dbReference type="Proteomes" id="UP000001584">
    <property type="component" value="Chromosome"/>
</dbReference>
<dbReference type="GO" id="GO:0005829">
    <property type="term" value="C:cytosol"/>
    <property type="evidence" value="ECO:0000304"/>
    <property type="project" value="Reactome"/>
</dbReference>
<dbReference type="GO" id="GO:0005886">
    <property type="term" value="C:plasma membrane"/>
    <property type="evidence" value="ECO:0007005"/>
    <property type="project" value="MTBBASE"/>
</dbReference>
<dbReference type="GO" id="GO:0070566">
    <property type="term" value="F:adenylyltransferase activity"/>
    <property type="evidence" value="ECO:0000314"/>
    <property type="project" value="MTBBASE"/>
</dbReference>
<dbReference type="GO" id="GO:0005524">
    <property type="term" value="F:ATP binding"/>
    <property type="evidence" value="ECO:0007669"/>
    <property type="project" value="UniProtKB-KW"/>
</dbReference>
<dbReference type="GO" id="GO:0004321">
    <property type="term" value="F:fatty-acyl-CoA synthase activity"/>
    <property type="evidence" value="ECO:0000314"/>
    <property type="project" value="MTBBASE"/>
</dbReference>
<dbReference type="GO" id="GO:0016874">
    <property type="term" value="F:ligase activity"/>
    <property type="evidence" value="ECO:0007669"/>
    <property type="project" value="UniProtKB-KW"/>
</dbReference>
<dbReference type="GO" id="GO:0051701">
    <property type="term" value="P:biological process involved in interaction with host"/>
    <property type="evidence" value="ECO:0000315"/>
    <property type="project" value="MTBBASE"/>
</dbReference>
<dbReference type="GO" id="GO:0071770">
    <property type="term" value="P:DIM/DIP cell wall layer assembly"/>
    <property type="evidence" value="ECO:0000315"/>
    <property type="project" value="MTBBASE"/>
</dbReference>
<dbReference type="GO" id="GO:0006633">
    <property type="term" value="P:fatty acid biosynthetic process"/>
    <property type="evidence" value="ECO:0000318"/>
    <property type="project" value="GO_Central"/>
</dbReference>
<dbReference type="GO" id="GO:0008610">
    <property type="term" value="P:lipid biosynthetic process"/>
    <property type="evidence" value="ECO:0000315"/>
    <property type="project" value="MTBBASE"/>
</dbReference>
<dbReference type="GO" id="GO:0052170">
    <property type="term" value="P:symbiont-mediated suppression of host innate immune response"/>
    <property type="evidence" value="ECO:0000314"/>
    <property type="project" value="MTBBASE"/>
</dbReference>
<dbReference type="CDD" id="cd05931">
    <property type="entry name" value="FAAL"/>
    <property type="match status" value="1"/>
</dbReference>
<dbReference type="FunFam" id="3.30.300.30:FF:000016">
    <property type="entry name" value="Fatty-acid-CoA ligase FadD26"/>
    <property type="match status" value="1"/>
</dbReference>
<dbReference type="FunFam" id="3.40.50.12780:FF:000013">
    <property type="entry name" value="Long-chain-fatty-acid--AMP ligase FadD32"/>
    <property type="match status" value="1"/>
</dbReference>
<dbReference type="Gene3D" id="3.30.300.30">
    <property type="match status" value="1"/>
</dbReference>
<dbReference type="Gene3D" id="3.40.50.12780">
    <property type="entry name" value="N-terminal domain of ligase-like"/>
    <property type="match status" value="1"/>
</dbReference>
<dbReference type="InterPro" id="IPR025110">
    <property type="entry name" value="AMP-bd_C"/>
</dbReference>
<dbReference type="InterPro" id="IPR045851">
    <property type="entry name" value="AMP-bd_C_sf"/>
</dbReference>
<dbReference type="InterPro" id="IPR000873">
    <property type="entry name" value="AMP-dep_synth/lig_dom"/>
</dbReference>
<dbReference type="InterPro" id="IPR042099">
    <property type="entry name" value="ANL_N_sf"/>
</dbReference>
<dbReference type="InterPro" id="IPR040097">
    <property type="entry name" value="FAAL/FAAC"/>
</dbReference>
<dbReference type="InterPro" id="IPR053437">
    <property type="entry name" value="LCFA-AMP_ligase_FadD28"/>
</dbReference>
<dbReference type="NCBIfam" id="NF038338">
    <property type="entry name" value="FAAL_FadD28"/>
    <property type="match status" value="1"/>
</dbReference>
<dbReference type="NCBIfam" id="NF004509">
    <property type="entry name" value="PRK05850.1"/>
    <property type="match status" value="1"/>
</dbReference>
<dbReference type="PANTHER" id="PTHR22754:SF32">
    <property type="entry name" value="DISCO-INTERACTING PROTEIN 2"/>
    <property type="match status" value="1"/>
</dbReference>
<dbReference type="PANTHER" id="PTHR22754">
    <property type="entry name" value="DISCO-INTERACTING PROTEIN 2 DIP2 -RELATED"/>
    <property type="match status" value="1"/>
</dbReference>
<dbReference type="Pfam" id="PF00501">
    <property type="entry name" value="AMP-binding"/>
    <property type="match status" value="1"/>
</dbReference>
<dbReference type="Pfam" id="PF23024">
    <property type="entry name" value="AMP-dom_DIP2-like"/>
    <property type="match status" value="1"/>
</dbReference>
<dbReference type="SUPFAM" id="SSF56801">
    <property type="entry name" value="Acetyl-CoA synthetase-like"/>
    <property type="match status" value="1"/>
</dbReference>
<gene>
    <name type="primary">fadD28</name>
    <name type="synonym">acoas</name>
    <name type="ordered locus">Rv2941</name>
</gene>
<sequence>MSVRSLPAALRACARLQPHDPAFTFMDYEQDWDGVAITLTWSQLYRRTLNVAQELSRCGSTGDRVVISAPQGLEYVVAFLGALQAGRIAVPLSVPQGGVTDERSDSVLSDSSPVAILTTSSAVDDVVQHVARRPGESPPSIIEVDLLDLDAPNGYTFKEDEYPSTAYLQYTSGSTRTPAGVVMSHQNVRVNFEQLMSGYFADTDGIPPPNSALVSWLPFYHDMGLVIGICAPILGGYPAVLTSPVSFLQRPARWMHLMASDFHAFSAAPNFAFELAARRTTDDDMAGRDLGNILTILSGSERVQAATIKRFADRFARFNLQERVIRPSYGLAEATVYVATSKPGQPPETVDFDTESLSAGHAKPCAGGGATSLISYMLPRSPIVRIVDSDTCIECPDGTVGEIWVHGDNVANGYWQKPDESERTFGGKIVTPSPGTPEGPWLRTGDSGFVTDGKMFIIGRIKDLLIVYGRNHSPDDIEATIQEITRGRCAAISVPGDRSTEKLVAIIELKKRGDSDQDAMARLGAIKREVTSALSSSHGLSVADLVLVAPGSIPITTSGKVRRGACVEQYRQDQFARLDA</sequence>
<evidence type="ECO:0000256" key="1">
    <source>
        <dbReference type="SAM" id="MobiDB-lite"/>
    </source>
</evidence>
<evidence type="ECO:0000269" key="2">
    <source>
    </source>
</evidence>
<evidence type="ECO:0000269" key="3">
    <source>
    </source>
</evidence>
<evidence type="ECO:0000269" key="4">
    <source>
    </source>
</evidence>
<evidence type="ECO:0000269" key="5">
    <source>
    </source>
</evidence>
<evidence type="ECO:0000269" key="6">
    <source>
    </source>
</evidence>
<evidence type="ECO:0000269" key="7">
    <source>
    </source>
</evidence>
<evidence type="ECO:0000269" key="8">
    <source>
    </source>
</evidence>
<evidence type="ECO:0000303" key="9">
    <source>
    </source>
</evidence>
<evidence type="ECO:0000305" key="10"/>
<evidence type="ECO:0000305" key="11">
    <source>
    </source>
</evidence>
<evidence type="ECO:0007829" key="12">
    <source>
        <dbReference type="PDB" id="3E53"/>
    </source>
</evidence>
<evidence type="ECO:0007829" key="13">
    <source>
        <dbReference type="PDB" id="3T5A"/>
    </source>
</evidence>